<gene>
    <name evidence="1" type="primary">plsY</name>
    <name type="ordered locus">LA_1304</name>
</gene>
<name>PLSY_LEPIN</name>
<dbReference type="EC" id="2.3.1.275" evidence="1"/>
<dbReference type="EMBL" id="AE010300">
    <property type="protein sequence ID" value="AAN48503.1"/>
    <property type="molecule type" value="Genomic_DNA"/>
</dbReference>
<dbReference type="RefSeq" id="NP_711485.1">
    <property type="nucleotide sequence ID" value="NC_004342.2"/>
</dbReference>
<dbReference type="RefSeq" id="WP_001010596.1">
    <property type="nucleotide sequence ID" value="NC_004342.2"/>
</dbReference>
<dbReference type="SMR" id="P59247"/>
<dbReference type="FunCoup" id="P59247">
    <property type="interactions" value="186"/>
</dbReference>
<dbReference type="STRING" id="189518.LA_1304"/>
<dbReference type="PaxDb" id="189518-LA_1304"/>
<dbReference type="EnsemblBacteria" id="AAN48503">
    <property type="protein sequence ID" value="AAN48503"/>
    <property type="gene ID" value="LA_1304"/>
</dbReference>
<dbReference type="KEGG" id="lil:LA_1304"/>
<dbReference type="PATRIC" id="fig|189518.3.peg.1302"/>
<dbReference type="HOGENOM" id="CLU_081254_7_1_12"/>
<dbReference type="InParanoid" id="P59247"/>
<dbReference type="OrthoDB" id="9777124at2"/>
<dbReference type="UniPathway" id="UPA00085"/>
<dbReference type="Proteomes" id="UP000001408">
    <property type="component" value="Chromosome I"/>
</dbReference>
<dbReference type="GO" id="GO:0005886">
    <property type="term" value="C:plasma membrane"/>
    <property type="evidence" value="ECO:0000318"/>
    <property type="project" value="GO_Central"/>
</dbReference>
<dbReference type="GO" id="GO:0043772">
    <property type="term" value="F:acyl-phosphate glycerol-3-phosphate acyltransferase activity"/>
    <property type="evidence" value="ECO:0007669"/>
    <property type="project" value="UniProtKB-UniRule"/>
</dbReference>
<dbReference type="GO" id="GO:0008654">
    <property type="term" value="P:phospholipid biosynthetic process"/>
    <property type="evidence" value="ECO:0007669"/>
    <property type="project" value="UniProtKB-UniRule"/>
</dbReference>
<dbReference type="HAMAP" id="MF_01043">
    <property type="entry name" value="PlsY"/>
    <property type="match status" value="1"/>
</dbReference>
<dbReference type="InterPro" id="IPR003811">
    <property type="entry name" value="G3P_acylTferase_PlsY"/>
</dbReference>
<dbReference type="NCBIfam" id="TIGR00023">
    <property type="entry name" value="glycerol-3-phosphate 1-O-acyltransferase PlsY"/>
    <property type="match status" value="1"/>
</dbReference>
<dbReference type="PANTHER" id="PTHR30309:SF0">
    <property type="entry name" value="GLYCEROL-3-PHOSPHATE ACYLTRANSFERASE-RELATED"/>
    <property type="match status" value="1"/>
</dbReference>
<dbReference type="PANTHER" id="PTHR30309">
    <property type="entry name" value="INNER MEMBRANE PROTEIN YGIH"/>
    <property type="match status" value="1"/>
</dbReference>
<dbReference type="Pfam" id="PF02660">
    <property type="entry name" value="G3P_acyltransf"/>
    <property type="match status" value="1"/>
</dbReference>
<dbReference type="SMART" id="SM01207">
    <property type="entry name" value="G3P_acyltransf"/>
    <property type="match status" value="1"/>
</dbReference>
<evidence type="ECO:0000255" key="1">
    <source>
        <dbReference type="HAMAP-Rule" id="MF_01043"/>
    </source>
</evidence>
<protein>
    <recommendedName>
        <fullName evidence="1">Glycerol-3-phosphate acyltransferase</fullName>
    </recommendedName>
    <alternativeName>
        <fullName evidence="1">Acyl-PO4 G3P acyltransferase</fullName>
    </alternativeName>
    <alternativeName>
        <fullName evidence="1">Acyl-phosphate--glycerol-3-phosphate acyltransferase</fullName>
    </alternativeName>
    <alternativeName>
        <fullName evidence="1">G3P acyltransferase</fullName>
        <shortName evidence="1">GPAT</shortName>
        <ecNumber evidence="1">2.3.1.275</ecNumber>
    </alternativeName>
    <alternativeName>
        <fullName evidence="1">Lysophosphatidic acid synthase</fullName>
        <shortName evidence="1">LPA synthase</shortName>
    </alternativeName>
</protein>
<reference key="1">
    <citation type="journal article" date="2003" name="Nature">
        <title>Unique physiological and pathogenic features of Leptospira interrogans revealed by whole-genome sequencing.</title>
        <authorList>
            <person name="Ren S.-X."/>
            <person name="Fu G."/>
            <person name="Jiang X.-G."/>
            <person name="Zeng R."/>
            <person name="Miao Y.-G."/>
            <person name="Xu H."/>
            <person name="Zhang Y.-X."/>
            <person name="Xiong H."/>
            <person name="Lu G."/>
            <person name="Lu L.-F."/>
            <person name="Jiang H.-Q."/>
            <person name="Jia J."/>
            <person name="Tu Y.-F."/>
            <person name="Jiang J.-X."/>
            <person name="Gu W.-Y."/>
            <person name="Zhang Y.-Q."/>
            <person name="Cai Z."/>
            <person name="Sheng H.-H."/>
            <person name="Yin H.-F."/>
            <person name="Zhang Y."/>
            <person name="Zhu G.-F."/>
            <person name="Wan M."/>
            <person name="Huang H.-L."/>
            <person name="Qian Z."/>
            <person name="Wang S.-Y."/>
            <person name="Ma W."/>
            <person name="Yao Z.-J."/>
            <person name="Shen Y."/>
            <person name="Qiang B.-Q."/>
            <person name="Xia Q.-C."/>
            <person name="Guo X.-K."/>
            <person name="Danchin A."/>
            <person name="Saint Girons I."/>
            <person name="Somerville R.L."/>
            <person name="Wen Y.-M."/>
            <person name="Shi M.-H."/>
            <person name="Chen Z."/>
            <person name="Xu J.-G."/>
            <person name="Zhao G.-P."/>
        </authorList>
    </citation>
    <scope>NUCLEOTIDE SEQUENCE [LARGE SCALE GENOMIC DNA]</scope>
    <source>
        <strain>56601</strain>
    </source>
</reference>
<proteinExistence type="inferred from homology"/>
<keyword id="KW-0997">Cell inner membrane</keyword>
<keyword id="KW-1003">Cell membrane</keyword>
<keyword id="KW-0444">Lipid biosynthesis</keyword>
<keyword id="KW-0443">Lipid metabolism</keyword>
<keyword id="KW-0472">Membrane</keyword>
<keyword id="KW-0594">Phospholipid biosynthesis</keyword>
<keyword id="KW-1208">Phospholipid metabolism</keyword>
<keyword id="KW-1185">Reference proteome</keyword>
<keyword id="KW-0808">Transferase</keyword>
<keyword id="KW-0812">Transmembrane</keyword>
<keyword id="KW-1133">Transmembrane helix</keyword>
<organism>
    <name type="scientific">Leptospira interrogans serogroup Icterohaemorrhagiae serovar Lai (strain 56601)</name>
    <dbReference type="NCBI Taxonomy" id="189518"/>
    <lineage>
        <taxon>Bacteria</taxon>
        <taxon>Pseudomonadati</taxon>
        <taxon>Spirochaetota</taxon>
        <taxon>Spirochaetia</taxon>
        <taxon>Leptospirales</taxon>
        <taxon>Leptospiraceae</taxon>
        <taxon>Leptospira</taxon>
    </lineage>
</organism>
<accession>P59247</accession>
<comment type="function">
    <text evidence="1">Catalyzes the transfer of an acyl group from acyl-phosphate (acyl-PO(4)) to glycerol-3-phosphate (G3P) to form lysophosphatidic acid (LPA). This enzyme utilizes acyl-phosphate as fatty acyl donor, but not acyl-CoA or acyl-ACP.</text>
</comment>
<comment type="catalytic activity">
    <reaction evidence="1">
        <text>an acyl phosphate + sn-glycerol 3-phosphate = a 1-acyl-sn-glycero-3-phosphate + phosphate</text>
        <dbReference type="Rhea" id="RHEA:34075"/>
        <dbReference type="ChEBI" id="CHEBI:43474"/>
        <dbReference type="ChEBI" id="CHEBI:57597"/>
        <dbReference type="ChEBI" id="CHEBI:57970"/>
        <dbReference type="ChEBI" id="CHEBI:59918"/>
        <dbReference type="EC" id="2.3.1.275"/>
    </reaction>
</comment>
<comment type="pathway">
    <text evidence="1">Lipid metabolism; phospholipid metabolism.</text>
</comment>
<comment type="subunit">
    <text evidence="1">Probably interacts with PlsX.</text>
</comment>
<comment type="subcellular location">
    <subcellularLocation>
        <location evidence="1">Cell inner membrane</location>
        <topology evidence="1">Multi-pass membrane protein</topology>
    </subcellularLocation>
</comment>
<comment type="similarity">
    <text evidence="1">Belongs to the PlsY family.</text>
</comment>
<sequence length="216" mass="23882">MNFPIFALFSFVSGSIPFGYWIALRFAGVDIRKLGSKNIGATNVGRLIGWKFGFIVLALDITKGMLPVYLSSVYVPEGGIPFQLLCGVCAVLGHMFSPFLGFRGGKGVATTFGVFLVLTPIACLGAVLVFWVVYKFFKFVSLGSIFASITLPLVYAFSTILLLHEEVSYWVLGTMVFISFGIILTHRENIIRILNRSELFAVKGEEQDGDSERNRR</sequence>
<feature type="chain" id="PRO_0000188393" description="Glycerol-3-phosphate acyltransferase">
    <location>
        <begin position="1"/>
        <end position="216"/>
    </location>
</feature>
<feature type="transmembrane region" description="Helical" evidence="1">
    <location>
        <begin position="3"/>
        <end position="23"/>
    </location>
</feature>
<feature type="transmembrane region" description="Helical" evidence="1">
    <location>
        <begin position="48"/>
        <end position="68"/>
    </location>
</feature>
<feature type="transmembrane region" description="Helical" evidence="1">
    <location>
        <begin position="82"/>
        <end position="102"/>
    </location>
</feature>
<feature type="transmembrane region" description="Helical" evidence="1">
    <location>
        <begin position="112"/>
        <end position="132"/>
    </location>
</feature>
<feature type="transmembrane region" description="Helical" evidence="1">
    <location>
        <begin position="142"/>
        <end position="162"/>
    </location>
</feature>
<feature type="transmembrane region" description="Helical" evidence="1">
    <location>
        <begin position="166"/>
        <end position="186"/>
    </location>
</feature>